<proteinExistence type="inferred from homology"/>
<protein>
    <recommendedName>
        <fullName evidence="1">UPF0312 protein Spro_1887</fullName>
    </recommendedName>
</protein>
<reference key="1">
    <citation type="submission" date="2007-09" db="EMBL/GenBank/DDBJ databases">
        <title>Complete sequence of chromosome of Serratia proteamaculans 568.</title>
        <authorList>
            <consortium name="US DOE Joint Genome Institute"/>
            <person name="Copeland A."/>
            <person name="Lucas S."/>
            <person name="Lapidus A."/>
            <person name="Barry K."/>
            <person name="Glavina del Rio T."/>
            <person name="Dalin E."/>
            <person name="Tice H."/>
            <person name="Pitluck S."/>
            <person name="Chain P."/>
            <person name="Malfatti S."/>
            <person name="Shin M."/>
            <person name="Vergez L."/>
            <person name="Schmutz J."/>
            <person name="Larimer F."/>
            <person name="Land M."/>
            <person name="Hauser L."/>
            <person name="Kyrpides N."/>
            <person name="Kim E."/>
            <person name="Taghavi S."/>
            <person name="Newman L."/>
            <person name="Vangronsveld J."/>
            <person name="van der Lelie D."/>
            <person name="Richardson P."/>
        </authorList>
    </citation>
    <scope>NUCLEOTIDE SEQUENCE [LARGE SCALE GENOMIC DNA]</scope>
    <source>
        <strain>568</strain>
    </source>
</reference>
<gene>
    <name type="ordered locus">Spro_1887</name>
</gene>
<name>Y1887_SERP5</name>
<feature type="signal peptide" evidence="1">
    <location>
        <begin position="1"/>
        <end position="23"/>
    </location>
</feature>
<feature type="chain" id="PRO_5000279280" description="UPF0312 protein Spro_1887">
    <location>
        <begin position="24"/>
        <end position="192"/>
    </location>
</feature>
<evidence type="ECO:0000255" key="1">
    <source>
        <dbReference type="HAMAP-Rule" id="MF_00780"/>
    </source>
</evidence>
<comment type="subcellular location">
    <subcellularLocation>
        <location evidence="1">Periplasm</location>
    </subcellularLocation>
</comment>
<comment type="similarity">
    <text evidence="1">Belongs to the UPF0312 family. Type 1 subfamily.</text>
</comment>
<sequence length="192" mass="20899">MLKKTVLGLTAGAMLLSAGSALAADYKIDKQGQHAFIEFRIQHLGYSWLYGTFKDFDGGFTFDEKDPSKDKVNVTINTASVDTNHAERDKHLRSAEFLNVEKNKQAKFESTEVKKNGEGYAVVGNLTLNGVTKPVTLDAKLIGQGNDPWGGYRAGFEANGKIKLKDFGITTDLGPASQDVELIISVEGVRAK</sequence>
<keyword id="KW-0574">Periplasm</keyword>
<keyword id="KW-0732">Signal</keyword>
<dbReference type="EMBL" id="CP000826">
    <property type="protein sequence ID" value="ABV40990.1"/>
    <property type="molecule type" value="Genomic_DNA"/>
</dbReference>
<dbReference type="SMR" id="A8GD00"/>
<dbReference type="STRING" id="399741.Spro_1887"/>
<dbReference type="KEGG" id="spe:Spro_1887"/>
<dbReference type="eggNOG" id="COG2353">
    <property type="taxonomic scope" value="Bacteria"/>
</dbReference>
<dbReference type="HOGENOM" id="CLU_071003_1_2_6"/>
<dbReference type="OrthoDB" id="9811006at2"/>
<dbReference type="GO" id="GO:0042597">
    <property type="term" value="C:periplasmic space"/>
    <property type="evidence" value="ECO:0007669"/>
    <property type="project" value="UniProtKB-SubCell"/>
</dbReference>
<dbReference type="Gene3D" id="2.40.128.110">
    <property type="entry name" value="Lipid/polyisoprenoid-binding, YceI-like"/>
    <property type="match status" value="1"/>
</dbReference>
<dbReference type="HAMAP" id="MF_00780">
    <property type="entry name" value="UPF0312"/>
    <property type="match status" value="1"/>
</dbReference>
<dbReference type="InterPro" id="IPR007372">
    <property type="entry name" value="Lipid/polyisoprenoid-bd_YceI"/>
</dbReference>
<dbReference type="InterPro" id="IPR036761">
    <property type="entry name" value="TTHA0802/YceI-like_sf"/>
</dbReference>
<dbReference type="InterPro" id="IPR023480">
    <property type="entry name" value="UPF0312/YceI"/>
</dbReference>
<dbReference type="NCBIfam" id="NF002994">
    <property type="entry name" value="PRK03757.1"/>
    <property type="match status" value="1"/>
</dbReference>
<dbReference type="PANTHER" id="PTHR34406">
    <property type="entry name" value="PROTEIN YCEI"/>
    <property type="match status" value="1"/>
</dbReference>
<dbReference type="PANTHER" id="PTHR34406:SF1">
    <property type="entry name" value="PROTEIN YCEI"/>
    <property type="match status" value="1"/>
</dbReference>
<dbReference type="Pfam" id="PF04264">
    <property type="entry name" value="YceI"/>
    <property type="match status" value="1"/>
</dbReference>
<dbReference type="SMART" id="SM00867">
    <property type="entry name" value="YceI"/>
    <property type="match status" value="1"/>
</dbReference>
<dbReference type="SUPFAM" id="SSF101874">
    <property type="entry name" value="YceI-like"/>
    <property type="match status" value="1"/>
</dbReference>
<organism>
    <name type="scientific">Serratia proteamaculans (strain 568)</name>
    <dbReference type="NCBI Taxonomy" id="399741"/>
    <lineage>
        <taxon>Bacteria</taxon>
        <taxon>Pseudomonadati</taxon>
        <taxon>Pseudomonadota</taxon>
        <taxon>Gammaproteobacteria</taxon>
        <taxon>Enterobacterales</taxon>
        <taxon>Yersiniaceae</taxon>
        <taxon>Serratia</taxon>
    </lineage>
</organism>
<accession>A8GD00</accession>